<protein>
    <recommendedName>
        <fullName>Pyrokinin-1</fullName>
        <shortName>Cam-PK-1</shortName>
    </recommendedName>
    <alternativeName>
        <fullName>FXPRL-Amide</fullName>
    </alternativeName>
</protein>
<comment type="function">
    <text evidence="1">Mediates visceral muscle contractile activity (myotropic activity).</text>
</comment>
<comment type="subcellular location">
    <subcellularLocation>
        <location>Secreted</location>
    </subcellularLocation>
</comment>
<comment type="mass spectrometry"/>
<comment type="similarity">
    <text evidence="2">Belongs to the pyrokinin family.</text>
</comment>
<keyword id="KW-0027">Amidation</keyword>
<keyword id="KW-0903">Direct protein sequencing</keyword>
<keyword id="KW-0527">Neuropeptide</keyword>
<keyword id="KW-0964">Secreted</keyword>
<evidence type="ECO:0000269" key="1">
    <source ref="1"/>
</evidence>
<evidence type="ECO:0000305" key="2"/>
<proteinExistence type="evidence at protein level"/>
<organism>
    <name type="scientific">Carausius morosus</name>
    <name type="common">Indian stick insect</name>
    <name type="synonym">Dixippus morosus</name>
    <dbReference type="NCBI Taxonomy" id="7022"/>
    <lineage>
        <taxon>Eukaryota</taxon>
        <taxon>Metazoa</taxon>
        <taxon>Ecdysozoa</taxon>
        <taxon>Arthropoda</taxon>
        <taxon>Hexapoda</taxon>
        <taxon>Insecta</taxon>
        <taxon>Pterygota</taxon>
        <taxon>Neoptera</taxon>
        <taxon>Polyneoptera</taxon>
        <taxon>Phasmatodea</taxon>
        <taxon>Verophasmatodea</taxon>
        <taxon>Anareolatae</taxon>
        <taxon>Lonchodidae</taxon>
        <taxon>Lonchodinae</taxon>
        <taxon>Carausius</taxon>
    </lineage>
</organism>
<sequence>DEGGTQYTPRL</sequence>
<feature type="peptide" id="PRO_0000044321" description="Pyrokinin-1">
    <location>
        <begin position="1"/>
        <end position="11"/>
    </location>
</feature>
<feature type="modified residue" description="Leucine amide" evidence="1">
    <location>
        <position position="11"/>
    </location>
</feature>
<accession>P82684</accession>
<dbReference type="GO" id="GO:0005576">
    <property type="term" value="C:extracellular region"/>
    <property type="evidence" value="ECO:0007669"/>
    <property type="project" value="UniProtKB-SubCell"/>
</dbReference>
<dbReference type="GO" id="GO:0007218">
    <property type="term" value="P:neuropeptide signaling pathway"/>
    <property type="evidence" value="ECO:0007669"/>
    <property type="project" value="UniProtKB-KW"/>
</dbReference>
<name>PPK1_CARMO</name>
<reference key="1">
    <citation type="journal article" date="1999" name="Eur. J. Entomol.">
        <title>Myotropic neuropeptides from the retrocerebral complex of the stick insect, Carausius morosus (Phasmatodea: Lonchodidae).</title>
        <authorList>
            <person name="Predel R."/>
            <person name="Kellner R."/>
            <person name="Gaede G."/>
        </authorList>
    </citation>
    <scope>PROTEIN SEQUENCE</scope>
    <scope>AMIDATION AT LEU-11</scope>
    <scope>FUNCTION</scope>
    <scope>MASS SPECTROMETRY</scope>
    <source>
        <tissue>Corpora cardiaca</tissue>
    </source>
</reference>